<sequence length="212" mass="23060">MKLSKYIDHTLLKPQATEKDILKLIEEAKTYDFASVCVNPSWVKLAYENLKDTDVKVCTVVGFPLGATSTASKVYETKVAIEDGADEIDMVISVGQLKSGNDEYVKEEIKKIVEASKNKLVKVIIETCLLTEEEKVKACTLSKEAGADYVKTSTGFSTGGAKPEDIKLMRETVGKNMGVKASGGIHTREEMEVMIENGATRIGASCGVELVK</sequence>
<reference key="1">
    <citation type="submission" date="2008-10" db="EMBL/GenBank/DDBJ databases">
        <title>Genome sequence of Clostridium botulinum A2 Kyoto.</title>
        <authorList>
            <person name="Shrivastava S."/>
            <person name="Brinkac L.M."/>
            <person name="Brown J.L."/>
            <person name="Bruce D."/>
            <person name="Detter C.C."/>
            <person name="Johnson E.A."/>
            <person name="Munk C.A."/>
            <person name="Smith L.A."/>
            <person name="Smith T.J."/>
            <person name="Sutton G."/>
            <person name="Brettin T.S."/>
        </authorList>
    </citation>
    <scope>NUCLEOTIDE SEQUENCE [LARGE SCALE GENOMIC DNA]</scope>
    <source>
        <strain>Kyoto / Type A2</strain>
    </source>
</reference>
<feature type="chain" id="PRO_1000119172" description="Deoxyribose-phosphate aldolase">
    <location>
        <begin position="1"/>
        <end position="212"/>
    </location>
</feature>
<feature type="active site" description="Proton donor/acceptor" evidence="1">
    <location>
        <position position="89"/>
    </location>
</feature>
<feature type="active site" description="Schiff-base intermediate with acetaldehyde" evidence="1">
    <location>
        <position position="151"/>
    </location>
</feature>
<feature type="active site" description="Proton donor/acceptor" evidence="1">
    <location>
        <position position="180"/>
    </location>
</feature>
<keyword id="KW-0963">Cytoplasm</keyword>
<keyword id="KW-0456">Lyase</keyword>
<keyword id="KW-0704">Schiff base</keyword>
<protein>
    <recommendedName>
        <fullName evidence="1">Deoxyribose-phosphate aldolase</fullName>
        <shortName evidence="1">DERA</shortName>
        <ecNumber evidence="1">4.1.2.4</ecNumber>
    </recommendedName>
    <alternativeName>
        <fullName evidence="1">2-deoxy-D-ribose 5-phosphate aldolase</fullName>
    </alternativeName>
    <alternativeName>
        <fullName evidence="1">Phosphodeoxyriboaldolase</fullName>
        <shortName evidence="1">Deoxyriboaldolase</shortName>
    </alternativeName>
</protein>
<gene>
    <name evidence="1" type="primary">deoC</name>
    <name type="ordered locus">CLM_1804</name>
</gene>
<organism>
    <name type="scientific">Clostridium botulinum (strain Kyoto / Type A2)</name>
    <dbReference type="NCBI Taxonomy" id="536232"/>
    <lineage>
        <taxon>Bacteria</taxon>
        <taxon>Bacillati</taxon>
        <taxon>Bacillota</taxon>
        <taxon>Clostridia</taxon>
        <taxon>Eubacteriales</taxon>
        <taxon>Clostridiaceae</taxon>
        <taxon>Clostridium</taxon>
    </lineage>
</organism>
<dbReference type="EC" id="4.1.2.4" evidence="1"/>
<dbReference type="EMBL" id="CP001581">
    <property type="protein sequence ID" value="ACO84081.1"/>
    <property type="molecule type" value="Genomic_DNA"/>
</dbReference>
<dbReference type="RefSeq" id="WP_012704031.1">
    <property type="nucleotide sequence ID" value="NC_012563.1"/>
</dbReference>
<dbReference type="SMR" id="C1FN33"/>
<dbReference type="KEGG" id="cby:CLM_1804"/>
<dbReference type="eggNOG" id="COG0274">
    <property type="taxonomic scope" value="Bacteria"/>
</dbReference>
<dbReference type="HOGENOM" id="CLU_053595_0_1_9"/>
<dbReference type="UniPathway" id="UPA00002">
    <property type="reaction ID" value="UER00468"/>
</dbReference>
<dbReference type="Proteomes" id="UP000001374">
    <property type="component" value="Chromosome"/>
</dbReference>
<dbReference type="GO" id="GO:0005737">
    <property type="term" value="C:cytoplasm"/>
    <property type="evidence" value="ECO:0007669"/>
    <property type="project" value="UniProtKB-SubCell"/>
</dbReference>
<dbReference type="GO" id="GO:0004139">
    <property type="term" value="F:deoxyribose-phosphate aldolase activity"/>
    <property type="evidence" value="ECO:0007669"/>
    <property type="project" value="UniProtKB-UniRule"/>
</dbReference>
<dbReference type="GO" id="GO:0006018">
    <property type="term" value="P:2-deoxyribose 1-phosphate catabolic process"/>
    <property type="evidence" value="ECO:0007669"/>
    <property type="project" value="UniProtKB-UniRule"/>
</dbReference>
<dbReference type="GO" id="GO:0016052">
    <property type="term" value="P:carbohydrate catabolic process"/>
    <property type="evidence" value="ECO:0007669"/>
    <property type="project" value="TreeGrafter"/>
</dbReference>
<dbReference type="GO" id="GO:0009264">
    <property type="term" value="P:deoxyribonucleotide catabolic process"/>
    <property type="evidence" value="ECO:0007669"/>
    <property type="project" value="InterPro"/>
</dbReference>
<dbReference type="CDD" id="cd00959">
    <property type="entry name" value="DeoC"/>
    <property type="match status" value="1"/>
</dbReference>
<dbReference type="FunFam" id="3.20.20.70:FF:000044">
    <property type="entry name" value="Deoxyribose-phosphate aldolase"/>
    <property type="match status" value="1"/>
</dbReference>
<dbReference type="Gene3D" id="3.20.20.70">
    <property type="entry name" value="Aldolase class I"/>
    <property type="match status" value="1"/>
</dbReference>
<dbReference type="HAMAP" id="MF_00114">
    <property type="entry name" value="DeoC_type1"/>
    <property type="match status" value="1"/>
</dbReference>
<dbReference type="InterPro" id="IPR013785">
    <property type="entry name" value="Aldolase_TIM"/>
</dbReference>
<dbReference type="InterPro" id="IPR011343">
    <property type="entry name" value="DeoC"/>
</dbReference>
<dbReference type="InterPro" id="IPR002915">
    <property type="entry name" value="DeoC/FbaB/LacD_aldolase"/>
</dbReference>
<dbReference type="InterPro" id="IPR028581">
    <property type="entry name" value="DeoC_typeI"/>
</dbReference>
<dbReference type="NCBIfam" id="TIGR00126">
    <property type="entry name" value="deoC"/>
    <property type="match status" value="1"/>
</dbReference>
<dbReference type="PANTHER" id="PTHR10889">
    <property type="entry name" value="DEOXYRIBOSE-PHOSPHATE ALDOLASE"/>
    <property type="match status" value="1"/>
</dbReference>
<dbReference type="PANTHER" id="PTHR10889:SF1">
    <property type="entry name" value="DEOXYRIBOSE-PHOSPHATE ALDOLASE"/>
    <property type="match status" value="1"/>
</dbReference>
<dbReference type="Pfam" id="PF01791">
    <property type="entry name" value="DeoC"/>
    <property type="match status" value="1"/>
</dbReference>
<dbReference type="PIRSF" id="PIRSF001357">
    <property type="entry name" value="DeoC"/>
    <property type="match status" value="1"/>
</dbReference>
<dbReference type="SMART" id="SM01133">
    <property type="entry name" value="DeoC"/>
    <property type="match status" value="1"/>
</dbReference>
<dbReference type="SUPFAM" id="SSF51569">
    <property type="entry name" value="Aldolase"/>
    <property type="match status" value="1"/>
</dbReference>
<evidence type="ECO:0000255" key="1">
    <source>
        <dbReference type="HAMAP-Rule" id="MF_00114"/>
    </source>
</evidence>
<name>DEOC_CLOBJ</name>
<accession>C1FN33</accession>
<comment type="function">
    <text evidence="1">Catalyzes a reversible aldol reaction between acetaldehyde and D-glyceraldehyde 3-phosphate to generate 2-deoxy-D-ribose 5-phosphate.</text>
</comment>
<comment type="catalytic activity">
    <reaction evidence="1">
        <text>2-deoxy-D-ribose 5-phosphate = D-glyceraldehyde 3-phosphate + acetaldehyde</text>
        <dbReference type="Rhea" id="RHEA:12821"/>
        <dbReference type="ChEBI" id="CHEBI:15343"/>
        <dbReference type="ChEBI" id="CHEBI:59776"/>
        <dbReference type="ChEBI" id="CHEBI:62877"/>
        <dbReference type="EC" id="4.1.2.4"/>
    </reaction>
</comment>
<comment type="pathway">
    <text evidence="1">Carbohydrate degradation; 2-deoxy-D-ribose 1-phosphate degradation; D-glyceraldehyde 3-phosphate and acetaldehyde from 2-deoxy-alpha-D-ribose 1-phosphate: step 2/2.</text>
</comment>
<comment type="subcellular location">
    <subcellularLocation>
        <location evidence="1">Cytoplasm</location>
    </subcellularLocation>
</comment>
<comment type="similarity">
    <text evidence="1">Belongs to the DeoC/FbaB aldolase family. DeoC type 1 subfamily.</text>
</comment>
<proteinExistence type="inferred from homology"/>